<protein>
    <recommendedName>
        <fullName evidence="8">Dipeptide and tripeptide permease C</fullName>
    </recommendedName>
    <alternativeName>
        <fullName evidence="8">Dipeptide/tripeptide:H(+) symporter DtpC</fullName>
    </alternativeName>
</protein>
<evidence type="ECO:0000255" key="1"/>
<evidence type="ECO:0000269" key="2">
    <source>
    </source>
</evidence>
<evidence type="ECO:0000269" key="3">
    <source>
    </source>
</evidence>
<evidence type="ECO:0000269" key="4">
    <source>
    </source>
</evidence>
<evidence type="ECO:0000269" key="5">
    <source>
    </source>
</evidence>
<evidence type="ECO:0000269" key="6">
    <source>
    </source>
</evidence>
<evidence type="ECO:0000303" key="7">
    <source>
    </source>
</evidence>
<evidence type="ECO:0000305" key="8"/>
<evidence type="ECO:0007829" key="9">
    <source>
        <dbReference type="PDB" id="7ZC2"/>
    </source>
</evidence>
<name>DTPC_ECOLI</name>
<sequence length="485" mass="53055">MKTPSQPRAIYYIVAIQIWEYFSFYGMRALLILYLTHQLGFDDNHAISLFSAYASLVYVTPILGGWLADRLLGNRTAVIAGALLMTLGHVVLGIDTNSTFSLYLALAIIICGYGLFKSNISCLLGELYDENDHRRDGGFSLLYAAGNIGSIAAPIACGLAAQWYGWHVGFALAGGGMFIGLLIFLSGHRHFQSTRSMDKKALTSVKFALPVWSWLVVMLCLAPVFFTLLLENDWSGYLLAIVCLIAAQIIARMMIKFPEHRRALWQIVLLMFVGTLFWVLAQQGGSTISLFIDRFVNRQAFNIEVPTALFQSVNAIAVMLAGVVLAWLASPESRGNSTLRVWLKFAFGLLLMACGFMLLAFDARHAAADGQASMGVMISGLALMGFAELFIDPVAIAQITRLKMSGVLTGIYMLATGAVANWLAGVVAQQTTESQISGMAIAAYQRFFSQMGEWTLACVAIIVVLAFATRFLFSTPTNMIQESND</sequence>
<proteinExistence type="evidence at protein level"/>
<feature type="chain" id="PRO_0000064330" description="Dipeptide and tripeptide permease C">
    <location>
        <begin position="1"/>
        <end position="485"/>
    </location>
</feature>
<feature type="topological domain" description="Cytoplasmic" evidence="1">
    <location>
        <begin position="1"/>
        <end position="12"/>
    </location>
</feature>
<feature type="transmembrane region" description="Helical" evidence="1">
    <location>
        <begin position="13"/>
        <end position="33"/>
    </location>
</feature>
<feature type="topological domain" description="Periplasmic" evidence="1">
    <location>
        <begin position="34"/>
        <end position="46"/>
    </location>
</feature>
<feature type="transmembrane region" description="Helical" evidence="1">
    <location>
        <begin position="47"/>
        <end position="67"/>
    </location>
</feature>
<feature type="topological domain" description="Cytoplasmic" evidence="1">
    <location>
        <begin position="68"/>
        <end position="70"/>
    </location>
</feature>
<feature type="transmembrane region" description="Helical" evidence="1">
    <location>
        <begin position="71"/>
        <end position="93"/>
    </location>
</feature>
<feature type="topological domain" description="Periplasmic" evidence="1">
    <location>
        <begin position="94"/>
        <end position="102"/>
    </location>
</feature>
<feature type="transmembrane region" description="Helical" evidence="1">
    <location>
        <begin position="103"/>
        <end position="125"/>
    </location>
</feature>
<feature type="topological domain" description="Cytoplasmic" evidence="1">
    <location>
        <begin position="126"/>
        <end position="140"/>
    </location>
</feature>
<feature type="transmembrane region" description="Helical" evidence="1">
    <location>
        <begin position="141"/>
        <end position="161"/>
    </location>
</feature>
<feature type="topological domain" description="Periplasmic" evidence="1">
    <location>
        <begin position="162"/>
        <end position="164"/>
    </location>
</feature>
<feature type="transmembrane region" description="Helical" evidence="1">
    <location>
        <begin position="165"/>
        <end position="185"/>
    </location>
</feature>
<feature type="topological domain" description="Cytoplasmic" evidence="1">
    <location>
        <begin position="186"/>
        <end position="208"/>
    </location>
</feature>
<feature type="transmembrane region" description="Helical" evidence="1">
    <location>
        <begin position="209"/>
        <end position="229"/>
    </location>
</feature>
<feature type="topological domain" description="Periplasmic" evidence="1">
    <location>
        <begin position="230"/>
        <end position="234"/>
    </location>
</feature>
<feature type="transmembrane region" description="Helical" evidence="1">
    <location>
        <begin position="235"/>
        <end position="255"/>
    </location>
</feature>
<feature type="topological domain" description="Cytoplasmic" evidence="1">
    <location>
        <begin position="256"/>
        <end position="262"/>
    </location>
</feature>
<feature type="transmembrane region" description="Helical" evidence="1">
    <location>
        <begin position="263"/>
        <end position="283"/>
    </location>
</feature>
<feature type="topological domain" description="Periplasmic" evidence="1">
    <location>
        <begin position="284"/>
        <end position="307"/>
    </location>
</feature>
<feature type="transmembrane region" description="Helical" evidence="1">
    <location>
        <begin position="308"/>
        <end position="328"/>
    </location>
</feature>
<feature type="topological domain" description="Cytoplasmic" evidence="1">
    <location>
        <begin position="329"/>
        <end position="340"/>
    </location>
</feature>
<feature type="transmembrane region" description="Helical" evidence="1">
    <location>
        <begin position="341"/>
        <end position="361"/>
    </location>
</feature>
<feature type="topological domain" description="Periplasmic" evidence="1">
    <location>
        <begin position="362"/>
        <end position="375"/>
    </location>
</feature>
<feature type="transmembrane region" description="Helical" evidence="1">
    <location>
        <begin position="376"/>
        <end position="396"/>
    </location>
</feature>
<feature type="topological domain" description="Cytoplasmic" evidence="1">
    <location>
        <begin position="397"/>
        <end position="406"/>
    </location>
</feature>
<feature type="transmembrane region" description="Helical" evidence="1">
    <location>
        <begin position="407"/>
        <end position="427"/>
    </location>
</feature>
<feature type="topological domain" description="Periplasmic" evidence="1">
    <location>
        <begin position="428"/>
        <end position="446"/>
    </location>
</feature>
<feature type="transmembrane region" description="Helical" evidence="1">
    <location>
        <begin position="447"/>
        <end position="467"/>
    </location>
</feature>
<feature type="topological domain" description="Cytoplasmic" evidence="2">
    <location>
        <begin position="468"/>
        <end position="485"/>
    </location>
</feature>
<feature type="mutagenesis site" description="Lack of activity." evidence="4">
    <original>E</original>
    <variation>A</variation>
    <location>
        <position position="20"/>
    </location>
</feature>
<feature type="mutagenesis site" description="Decrease in activity." evidence="4">
    <original>E</original>
    <variation>D</variation>
    <location>
        <position position="20"/>
    </location>
</feature>
<feature type="mutagenesis site" description="Decrease in activity. Abolishes the pH dependency." evidence="4">
    <original>E</original>
    <variation>Q</variation>
    <location>
        <position position="20"/>
    </location>
</feature>
<feature type="mutagenesis site" description="Lack of activity." evidence="4">
    <original>E</original>
    <variation>A</variation>
    <location>
        <position position="388"/>
    </location>
</feature>
<feature type="mutagenesis site" description="Decrease in activity." evidence="4">
    <original>E</original>
    <variation>D</variation>
    <location>
        <position position="388"/>
    </location>
</feature>
<feature type="mutagenesis site" description="Decrease in activity. Does not bind Ala-Lys dipeptide." evidence="4 5">
    <original>E</original>
    <variation>Q</variation>
    <location>
        <position position="388"/>
    </location>
</feature>
<feature type="helix" evidence="9">
    <location>
        <begin position="9"/>
        <end position="37"/>
    </location>
</feature>
<feature type="helix" evidence="9">
    <location>
        <begin position="43"/>
        <end position="70"/>
    </location>
</feature>
<feature type="helix" evidence="9">
    <location>
        <begin position="74"/>
        <end position="94"/>
    </location>
</feature>
<feature type="helix" evidence="9">
    <location>
        <begin position="99"/>
        <end position="126"/>
    </location>
</feature>
<feature type="helix" evidence="9">
    <location>
        <begin position="135"/>
        <end position="164"/>
    </location>
</feature>
<feature type="helix" evidence="9">
    <location>
        <begin position="166"/>
        <end position="186"/>
    </location>
</feature>
<feature type="helix" evidence="9">
    <location>
        <begin position="187"/>
        <end position="190"/>
    </location>
</feature>
<feature type="helix" evidence="9">
    <location>
        <begin position="199"/>
        <end position="202"/>
    </location>
</feature>
<feature type="strand" evidence="9">
    <location>
        <begin position="204"/>
        <end position="206"/>
    </location>
</feature>
<feature type="helix" evidence="9">
    <location>
        <begin position="211"/>
        <end position="231"/>
    </location>
</feature>
<feature type="helix" evidence="9">
    <location>
        <begin position="235"/>
        <end position="256"/>
    </location>
</feature>
<feature type="helix" evidence="9">
    <location>
        <begin position="258"/>
        <end position="260"/>
    </location>
</feature>
<feature type="helix" evidence="9">
    <location>
        <begin position="261"/>
        <end position="281"/>
    </location>
</feature>
<feature type="turn" evidence="9">
    <location>
        <begin position="282"/>
        <end position="286"/>
    </location>
</feature>
<feature type="helix" evidence="9">
    <location>
        <begin position="287"/>
        <end position="295"/>
    </location>
</feature>
<feature type="helix" evidence="9">
    <location>
        <begin position="307"/>
        <end position="309"/>
    </location>
</feature>
<feature type="helix" evidence="9">
    <location>
        <begin position="310"/>
        <end position="327"/>
    </location>
</feature>
<feature type="helix" evidence="9">
    <location>
        <begin position="337"/>
        <end position="365"/>
    </location>
</feature>
<feature type="helix" evidence="9">
    <location>
        <begin position="366"/>
        <end position="368"/>
    </location>
</feature>
<feature type="strand" evidence="9">
    <location>
        <begin position="370"/>
        <end position="372"/>
    </location>
</feature>
<feature type="helix" evidence="9">
    <location>
        <begin position="374"/>
        <end position="387"/>
    </location>
</feature>
<feature type="helix" evidence="9">
    <location>
        <begin position="388"/>
        <end position="390"/>
    </location>
</feature>
<feature type="helix" evidence="9">
    <location>
        <begin position="392"/>
        <end position="399"/>
    </location>
</feature>
<feature type="helix" evidence="9">
    <location>
        <begin position="405"/>
        <end position="428"/>
    </location>
</feature>
<feature type="helix" evidence="9">
    <location>
        <begin position="429"/>
        <end position="432"/>
    </location>
</feature>
<feature type="helix" evidence="9">
    <location>
        <begin position="441"/>
        <end position="468"/>
    </location>
</feature>
<keyword id="KW-0002">3D-structure</keyword>
<keyword id="KW-0997">Cell inner membrane</keyword>
<keyword id="KW-1003">Cell membrane</keyword>
<keyword id="KW-0472">Membrane</keyword>
<keyword id="KW-0571">Peptide transport</keyword>
<keyword id="KW-0653">Protein transport</keyword>
<keyword id="KW-1185">Reference proteome</keyword>
<keyword id="KW-0769">Symport</keyword>
<keyword id="KW-0812">Transmembrane</keyword>
<keyword id="KW-1133">Transmembrane helix</keyword>
<keyword id="KW-0813">Transport</keyword>
<reference key="1">
    <citation type="journal article" date="1995" name="Nucleic Acids Res.">
        <title>Analysis of the Escherichia coli genome VI: DNA sequence of the region from 92.8 through 100 minutes.</title>
        <authorList>
            <person name="Burland V.D."/>
            <person name="Plunkett G. III"/>
            <person name="Sofia H.J."/>
            <person name="Daniels D.L."/>
            <person name="Blattner F.R."/>
        </authorList>
    </citation>
    <scope>NUCLEOTIDE SEQUENCE [LARGE SCALE GENOMIC DNA]</scope>
    <source>
        <strain>K12 / MG1655 / ATCC 47076</strain>
    </source>
</reference>
<reference key="2">
    <citation type="journal article" date="1997" name="Science">
        <title>The complete genome sequence of Escherichia coli K-12.</title>
        <authorList>
            <person name="Blattner F.R."/>
            <person name="Plunkett G. III"/>
            <person name="Bloch C.A."/>
            <person name="Perna N.T."/>
            <person name="Burland V."/>
            <person name="Riley M."/>
            <person name="Collado-Vides J."/>
            <person name="Glasner J.D."/>
            <person name="Rode C.K."/>
            <person name="Mayhew G.F."/>
            <person name="Gregor J."/>
            <person name="Davis N.W."/>
            <person name="Kirkpatrick H.A."/>
            <person name="Goeden M.A."/>
            <person name="Rose D.J."/>
            <person name="Mau B."/>
            <person name="Shao Y."/>
        </authorList>
    </citation>
    <scope>NUCLEOTIDE SEQUENCE [LARGE SCALE GENOMIC DNA]</scope>
    <source>
        <strain>K12 / MG1655 / ATCC 47076</strain>
    </source>
</reference>
<reference key="3">
    <citation type="journal article" date="2006" name="Mol. Syst. Biol.">
        <title>Highly accurate genome sequences of Escherichia coli K-12 strains MG1655 and W3110.</title>
        <authorList>
            <person name="Hayashi K."/>
            <person name="Morooka N."/>
            <person name="Yamamoto Y."/>
            <person name="Fujita K."/>
            <person name="Isono K."/>
            <person name="Choi S."/>
            <person name="Ohtsubo E."/>
            <person name="Baba T."/>
            <person name="Wanner B.L."/>
            <person name="Mori H."/>
            <person name="Horiuchi T."/>
        </authorList>
    </citation>
    <scope>NUCLEOTIDE SEQUENCE [LARGE SCALE GENOMIC DNA]</scope>
    <source>
        <strain>K12 / W3110 / ATCC 27325 / DSM 5911</strain>
    </source>
</reference>
<reference key="4">
    <citation type="journal article" date="2005" name="Science">
        <title>Global topology analysis of the Escherichia coli inner membrane proteome.</title>
        <authorList>
            <person name="Daley D.O."/>
            <person name="Rapp M."/>
            <person name="Granseth E."/>
            <person name="Melen K."/>
            <person name="Drew D."/>
            <person name="von Heijne G."/>
        </authorList>
    </citation>
    <scope>TOPOLOGY [LARGE SCALE ANALYSIS]</scope>
    <source>
        <strain>K12 / MG1655 / ATCC 47076</strain>
    </source>
</reference>
<reference key="5">
    <citation type="journal article" date="2009" name="Biochem. Biophys. Res. Commun.">
        <title>Ligand binding analyses of the putative peptide transporter YjdL from E. coli display a significant selectivity towards dipeptides.</title>
        <authorList>
            <person name="Ernst H.A."/>
            <person name="Pham A."/>
            <person name="Hald H."/>
            <person name="Kastrup J.S."/>
            <person name="Rahman M."/>
            <person name="Mirza O."/>
        </authorList>
    </citation>
    <scope>FUNCTION</scope>
    <source>
        <strain>K12 / MG1655 / ATCC 47076</strain>
    </source>
</reference>
<reference key="6">
    <citation type="journal article" date="2009" name="J. Mol. Biol.">
        <title>Projection structure of DtpD (YbgH), a prokaryotic member of the peptide transporter family.</title>
        <authorList>
            <person name="Casagrande F."/>
            <person name="Harder D."/>
            <person name="Schenk A."/>
            <person name="Meury M."/>
            <person name="Ucurum Z."/>
            <person name="Engel A."/>
            <person name="Weitz D."/>
            <person name="Daniel H."/>
            <person name="Fotiadis D."/>
        </authorList>
    </citation>
    <scope>GENE NAME</scope>
</reference>
<reference key="7">
    <citation type="journal article" date="2012" name="Peptides">
        <title>Biophysical characterization of the proton-coupled oligopeptide transporter YjdL.</title>
        <authorList>
            <person name="Jensen J.M."/>
            <person name="Simonsen F.C."/>
            <person name="Mastali A."/>
            <person name="Hald H."/>
            <person name="Lillebro I."/>
            <person name="Diness F."/>
            <person name="Olsen L."/>
            <person name="Mirza O."/>
        </authorList>
    </citation>
    <scope>FUNCTION</scope>
    <scope>SUBUNIT</scope>
    <scope>MUTAGENESIS OF GLU-388</scope>
</reference>
<reference key="8">
    <citation type="journal article" date="2012" name="Protein Pept. Lett.">
        <title>Functional investigation of conserved membrane-embedded glutamate residues in the proton-coupled peptide transporter YjdL.</title>
        <authorList>
            <person name="Jensen J.M."/>
            <person name="Ernst H."/>
            <person name="Wang X."/>
            <person name="Hald H."/>
            <person name="Ditta A.C."/>
            <person name="Ismat F."/>
            <person name="Rahman M."/>
            <person name="Mirza O."/>
        </authorList>
    </citation>
    <scope>FUNCTION</scope>
    <scope>BIOPHYSICOCHEMICAL PROPERTIES</scope>
    <scope>MUTAGENESIS OF GLU-20 AND GLU-388</scope>
</reference>
<reference key="9">
    <citation type="journal article" date="2014" name="FEBS Lett.">
        <title>New insights into the substrate specificities of proton-coupled oligopeptide transporters from E. coli by a pH sensitive assay.</title>
        <authorList>
            <person name="Prabhala B.K."/>
            <person name="Aduri N.G."/>
            <person name="Jensen J.M."/>
            <person name="Ernst H.A."/>
            <person name="Iram N."/>
            <person name="Rahman M."/>
            <person name="Mirza O."/>
        </authorList>
    </citation>
    <scope>FUNCTION</scope>
    <scope>BIOPHYSICOCHEMICAL PROPERTIES</scope>
    <source>
        <strain>K12 / MG1655 / ATCC 47076</strain>
    </source>
</reference>
<organism>
    <name type="scientific">Escherichia coli (strain K12)</name>
    <dbReference type="NCBI Taxonomy" id="83333"/>
    <lineage>
        <taxon>Bacteria</taxon>
        <taxon>Pseudomonadati</taxon>
        <taxon>Pseudomonadota</taxon>
        <taxon>Gammaproteobacteria</taxon>
        <taxon>Enterobacterales</taxon>
        <taxon>Enterobacteriaceae</taxon>
        <taxon>Escherichia</taxon>
    </lineage>
</organism>
<dbReference type="EMBL" id="U14003">
    <property type="protein sequence ID" value="AAA97030.1"/>
    <property type="molecule type" value="Genomic_DNA"/>
</dbReference>
<dbReference type="EMBL" id="U00096">
    <property type="protein sequence ID" value="AAC77091.1"/>
    <property type="molecule type" value="Genomic_DNA"/>
</dbReference>
<dbReference type="EMBL" id="AP009048">
    <property type="protein sequence ID" value="BAE78133.1"/>
    <property type="molecule type" value="Genomic_DNA"/>
</dbReference>
<dbReference type="PIR" id="S56359">
    <property type="entry name" value="S56359"/>
</dbReference>
<dbReference type="RefSeq" id="NP_418554.1">
    <property type="nucleotide sequence ID" value="NC_000913.3"/>
</dbReference>
<dbReference type="RefSeq" id="WP_000856829.1">
    <property type="nucleotide sequence ID" value="NZ_SSZK01000018.1"/>
</dbReference>
<dbReference type="PDB" id="7ZC2">
    <property type="method" value="EM"/>
    <property type="resolution" value="2.72 A"/>
    <property type="chains" value="A=1-485"/>
</dbReference>
<dbReference type="PDBsum" id="7ZC2"/>
<dbReference type="SMR" id="P39276"/>
<dbReference type="BioGRID" id="4261129">
    <property type="interactions" value="143"/>
</dbReference>
<dbReference type="FunCoup" id="P39276">
    <property type="interactions" value="273"/>
</dbReference>
<dbReference type="STRING" id="511145.b4130"/>
<dbReference type="TCDB" id="2.A.17.1.5">
    <property type="family name" value="the proton-dependent oligopeptide transporter (pot/ptr) family"/>
</dbReference>
<dbReference type="PaxDb" id="511145-b4130"/>
<dbReference type="EnsemblBacteria" id="AAC77091">
    <property type="protein sequence ID" value="AAC77091"/>
    <property type="gene ID" value="b4130"/>
</dbReference>
<dbReference type="GeneID" id="948644"/>
<dbReference type="KEGG" id="ecj:JW4091"/>
<dbReference type="KEGG" id="eco:b4130"/>
<dbReference type="KEGG" id="ecoc:C3026_22325"/>
<dbReference type="PATRIC" id="fig|511145.12.peg.4262"/>
<dbReference type="EchoBASE" id="EB2362"/>
<dbReference type="eggNOG" id="COG3104">
    <property type="taxonomic scope" value="Bacteria"/>
</dbReference>
<dbReference type="HOGENOM" id="CLU_004790_0_0_6"/>
<dbReference type="InParanoid" id="P39276"/>
<dbReference type="OMA" id="GHPVGLY"/>
<dbReference type="OrthoDB" id="9772725at2"/>
<dbReference type="PhylomeDB" id="P39276"/>
<dbReference type="BioCyc" id="EcoCyc:YJDL-MONOMER"/>
<dbReference type="BioCyc" id="MetaCyc:YJDL-MONOMER"/>
<dbReference type="BRENDA" id="7.4.2.5">
    <property type="organism ID" value="2026"/>
</dbReference>
<dbReference type="PRO" id="PR:P39276"/>
<dbReference type="Proteomes" id="UP000000625">
    <property type="component" value="Chromosome"/>
</dbReference>
<dbReference type="GO" id="GO:0005886">
    <property type="term" value="C:plasma membrane"/>
    <property type="evidence" value="ECO:0000314"/>
    <property type="project" value="EcoCyc"/>
</dbReference>
<dbReference type="GO" id="GO:0071916">
    <property type="term" value="F:dipeptide transmembrane transporter activity"/>
    <property type="evidence" value="ECO:0000315"/>
    <property type="project" value="EcoCyc"/>
</dbReference>
<dbReference type="GO" id="GO:0015333">
    <property type="term" value="F:peptide:proton symporter activity"/>
    <property type="evidence" value="ECO:0000315"/>
    <property type="project" value="EcoCyc"/>
</dbReference>
<dbReference type="GO" id="GO:0015078">
    <property type="term" value="F:proton transmembrane transporter activity"/>
    <property type="evidence" value="ECO:0000315"/>
    <property type="project" value="EcoCyc"/>
</dbReference>
<dbReference type="GO" id="GO:0042937">
    <property type="term" value="F:tripeptide transmembrane transporter activity"/>
    <property type="evidence" value="ECO:0000315"/>
    <property type="project" value="EcoCyc"/>
</dbReference>
<dbReference type="GO" id="GO:0035442">
    <property type="term" value="P:dipeptide transmembrane transport"/>
    <property type="evidence" value="ECO:0000315"/>
    <property type="project" value="EcoCyc"/>
</dbReference>
<dbReference type="GO" id="GO:0015031">
    <property type="term" value="P:protein transport"/>
    <property type="evidence" value="ECO:0007669"/>
    <property type="project" value="UniProtKB-KW"/>
</dbReference>
<dbReference type="GO" id="GO:1902600">
    <property type="term" value="P:proton transmembrane transport"/>
    <property type="evidence" value="ECO:0000315"/>
    <property type="project" value="EcoCyc"/>
</dbReference>
<dbReference type="GO" id="GO:0035443">
    <property type="term" value="P:tripeptide transmembrane transport"/>
    <property type="evidence" value="ECO:0000315"/>
    <property type="project" value="EcoCyc"/>
</dbReference>
<dbReference type="CDD" id="cd17346">
    <property type="entry name" value="MFS_DtpA_like"/>
    <property type="match status" value="1"/>
</dbReference>
<dbReference type="FunFam" id="1.20.1250.20:FF:000035">
    <property type="entry name" value="Dipeptide permease D"/>
    <property type="match status" value="1"/>
</dbReference>
<dbReference type="Gene3D" id="1.20.1250.20">
    <property type="entry name" value="MFS general substrate transporter like domains"/>
    <property type="match status" value="1"/>
</dbReference>
<dbReference type="InterPro" id="IPR005279">
    <property type="entry name" value="Dipep/tripep_permease"/>
</dbReference>
<dbReference type="InterPro" id="IPR020846">
    <property type="entry name" value="MFS_dom"/>
</dbReference>
<dbReference type="InterPro" id="IPR036259">
    <property type="entry name" value="MFS_trans_sf"/>
</dbReference>
<dbReference type="InterPro" id="IPR050171">
    <property type="entry name" value="MFS_Transporters"/>
</dbReference>
<dbReference type="InterPro" id="IPR000109">
    <property type="entry name" value="POT_fam"/>
</dbReference>
<dbReference type="InterPro" id="IPR018456">
    <property type="entry name" value="PTR2_symporter_CS"/>
</dbReference>
<dbReference type="NCBIfam" id="TIGR00924">
    <property type="entry name" value="yjdL_sub1_fam"/>
    <property type="match status" value="1"/>
</dbReference>
<dbReference type="PANTHER" id="PTHR23517:SF15">
    <property type="entry name" value="PROTON-DEPENDENT OLIGOPEPTIDE FAMILY TRANSPORT PROTEIN"/>
    <property type="match status" value="1"/>
</dbReference>
<dbReference type="PANTHER" id="PTHR23517">
    <property type="entry name" value="RESISTANCE PROTEIN MDTM, PUTATIVE-RELATED-RELATED"/>
    <property type="match status" value="1"/>
</dbReference>
<dbReference type="Pfam" id="PF00854">
    <property type="entry name" value="PTR2"/>
    <property type="match status" value="1"/>
</dbReference>
<dbReference type="SUPFAM" id="SSF103473">
    <property type="entry name" value="MFS general substrate transporter"/>
    <property type="match status" value="2"/>
</dbReference>
<dbReference type="PROSITE" id="PS50850">
    <property type="entry name" value="MFS"/>
    <property type="match status" value="1"/>
</dbReference>
<dbReference type="PROSITE" id="PS01022">
    <property type="entry name" value="PTR2_1"/>
    <property type="match status" value="1"/>
</dbReference>
<dbReference type="PROSITE" id="PS01023">
    <property type="entry name" value="PTR2_2"/>
    <property type="match status" value="1"/>
</dbReference>
<accession>P39276</accession>
<accession>Q2M6H3</accession>
<gene>
    <name evidence="7" type="primary">dtpC</name>
    <name type="synonym">yjdL</name>
    <name type="ordered locus">b4130</name>
    <name type="ordered locus">JW4091</name>
</gene>
<comment type="function">
    <text evidence="3 4 5 6">Proton-dependent permease that transports di- and tripeptides. Shows significantly higher specificity towards dipeptides than tripeptides. Has a preference for dipeptides with a C-terminal Lys residue. Can bind Ala-Lys, Lys-Ala, Ala-Ala. Can also transport alanine and trialanine.</text>
</comment>
<comment type="biophysicochemical properties">
    <kinetics>
        <KM evidence="6">0.07 mM for Ala-Lys</KM>
        <KM evidence="6">0.51 mM for Lys-Ala</KM>
    </kinetics>
    <phDependence>
        <text evidence="4">Optimum pH is around 6.5.</text>
    </phDependence>
</comment>
<comment type="subunit">
    <text evidence="5">Monomer.</text>
</comment>
<comment type="subcellular location">
    <subcellularLocation>
        <location evidence="2">Cell inner membrane</location>
        <topology evidence="1">Multi-pass membrane protein</topology>
    </subcellularLocation>
</comment>
<comment type="similarity">
    <text evidence="8">Belongs to the major facilitator superfamily. Proton-dependent oligopeptide transporter (POT/PTR) (TC 2.A.17) family.</text>
</comment>